<proteinExistence type="evidence at protein level"/>
<evidence type="ECO:0000305" key="1"/>
<evidence type="ECO:0007829" key="2">
    <source>
        <dbReference type="PDB" id="1UIU"/>
    </source>
</evidence>
<evidence type="ECO:0007829" key="3">
    <source>
        <dbReference type="PDB" id="1UIV"/>
    </source>
</evidence>
<evidence type="ECO:0007829" key="4">
    <source>
        <dbReference type="PDB" id="2NOO"/>
    </source>
</evidence>
<evidence type="ECO:0007829" key="5">
    <source>
        <dbReference type="PDB" id="3DP8"/>
    </source>
</evidence>
<evidence type="ECO:0007829" key="6">
    <source>
        <dbReference type="PDB" id="3E3K"/>
    </source>
</evidence>
<evidence type="ECO:0007829" key="7">
    <source>
        <dbReference type="PDB" id="5ON8"/>
    </source>
</evidence>
<accession>P33590</accession>
<accession>Q2M7D9</accession>
<comment type="function">
    <text>Involved in a nickel transport system, probably represents the nickel binder.</text>
</comment>
<comment type="interaction">
    <interactant intactId="EBI-555182">
        <id>P33590</id>
    </interactant>
    <interactant intactId="EBI-301077">
        <id>P0CE47</id>
        <label>tufA</label>
    </interactant>
    <organismsDiffer>false</organismsDiffer>
    <experiments>2</experiments>
</comment>
<comment type="subcellular location">
    <subcellularLocation>
        <location evidence="1">Periplasm</location>
    </subcellularLocation>
</comment>
<comment type="similarity">
    <text evidence="1">Belongs to the bacterial solute-binding protein 5 family.</text>
</comment>
<protein>
    <recommendedName>
        <fullName>Nickel-binding periplasmic protein</fullName>
    </recommendedName>
</protein>
<feature type="signal peptide">
    <location>
        <begin position="1"/>
        <end position="22"/>
    </location>
</feature>
<feature type="chain" id="PRO_0000031800" description="Nickel-binding periplasmic protein">
    <location>
        <begin position="23"/>
        <end position="524"/>
    </location>
</feature>
<feature type="strand" evidence="7">
    <location>
        <begin position="27"/>
        <end position="34"/>
    </location>
</feature>
<feature type="helix" evidence="4">
    <location>
        <begin position="46"/>
        <end position="48"/>
    </location>
</feature>
<feature type="helix" evidence="7">
    <location>
        <begin position="49"/>
        <end position="55"/>
    </location>
</feature>
<feature type="strand" evidence="7">
    <location>
        <begin position="59"/>
        <end position="62"/>
    </location>
</feature>
<feature type="strand" evidence="7">
    <location>
        <begin position="68"/>
        <end position="78"/>
    </location>
</feature>
<feature type="strand" evidence="2">
    <location>
        <begin position="80"/>
        <end position="82"/>
    </location>
</feature>
<feature type="strand" evidence="7">
    <location>
        <begin position="84"/>
        <end position="89"/>
    </location>
</feature>
<feature type="strand" evidence="5">
    <location>
        <begin position="96"/>
        <end position="98"/>
    </location>
</feature>
<feature type="helix" evidence="7">
    <location>
        <begin position="103"/>
        <end position="114"/>
    </location>
</feature>
<feature type="helix" evidence="7">
    <location>
        <begin position="115"/>
        <end position="120"/>
    </location>
</feature>
<feature type="helix" evidence="7">
    <location>
        <begin position="125"/>
        <end position="128"/>
    </location>
</feature>
<feature type="strand" evidence="7">
    <location>
        <begin position="129"/>
        <end position="146"/>
    </location>
</feature>
<feature type="helix" evidence="7">
    <location>
        <begin position="151"/>
        <end position="155"/>
    </location>
</feature>
<feature type="strand" evidence="7">
    <location>
        <begin position="157"/>
        <end position="161"/>
    </location>
</feature>
<feature type="helix" evidence="7">
    <location>
        <begin position="166"/>
        <end position="168"/>
    </location>
</feature>
<feature type="strand" evidence="3">
    <location>
        <begin position="170"/>
        <end position="172"/>
    </location>
</feature>
<feature type="strand" evidence="7">
    <location>
        <begin position="173"/>
        <end position="180"/>
    </location>
</feature>
<feature type="strand" evidence="7">
    <location>
        <begin position="184"/>
        <end position="193"/>
    </location>
</feature>
<feature type="turn" evidence="7">
    <location>
        <begin position="194"/>
        <end position="196"/>
    </location>
</feature>
<feature type="strand" evidence="7">
    <location>
        <begin position="197"/>
        <end position="202"/>
    </location>
</feature>
<feature type="strand" evidence="7">
    <location>
        <begin position="215"/>
        <end position="220"/>
    </location>
</feature>
<feature type="helix" evidence="7">
    <location>
        <begin position="224"/>
        <end position="232"/>
    </location>
</feature>
<feature type="turn" evidence="6">
    <location>
        <begin position="233"/>
        <end position="235"/>
    </location>
</feature>
<feature type="strand" evidence="7">
    <location>
        <begin position="237"/>
        <end position="242"/>
    </location>
</feature>
<feature type="turn" evidence="4">
    <location>
        <begin position="243"/>
        <end position="245"/>
    </location>
</feature>
<feature type="helix" evidence="7">
    <location>
        <begin position="248"/>
        <end position="256"/>
    </location>
</feature>
<feature type="strand" evidence="7">
    <location>
        <begin position="261"/>
        <end position="264"/>
    </location>
</feature>
<feature type="strand" evidence="7">
    <location>
        <begin position="269"/>
        <end position="275"/>
    </location>
</feature>
<feature type="turn" evidence="7">
    <location>
        <begin position="280"/>
        <end position="283"/>
    </location>
</feature>
<feature type="helix" evidence="7">
    <location>
        <begin position="285"/>
        <end position="294"/>
    </location>
</feature>
<feature type="helix" evidence="7">
    <location>
        <begin position="297"/>
        <end position="304"/>
    </location>
</feature>
<feature type="turn" evidence="4">
    <location>
        <begin position="305"/>
        <end position="307"/>
    </location>
</feature>
<feature type="strand" evidence="7">
    <location>
        <begin position="309"/>
        <end position="311"/>
    </location>
</feature>
<feature type="strand" evidence="7">
    <location>
        <begin position="314"/>
        <end position="316"/>
    </location>
</feature>
<feature type="helix" evidence="7">
    <location>
        <begin position="334"/>
        <end position="343"/>
    </location>
</feature>
<feature type="strand" evidence="7">
    <location>
        <begin position="363"/>
        <end position="369"/>
    </location>
</feature>
<feature type="helix" evidence="7">
    <location>
        <begin position="373"/>
        <end position="387"/>
    </location>
</feature>
<feature type="turn" evidence="7">
    <location>
        <begin position="388"/>
        <end position="390"/>
    </location>
</feature>
<feature type="strand" evidence="7">
    <location>
        <begin position="392"/>
        <end position="398"/>
    </location>
</feature>
<feature type="helix" evidence="7">
    <location>
        <begin position="400"/>
        <end position="409"/>
    </location>
</feature>
<feature type="strand" evidence="7">
    <location>
        <begin position="413"/>
        <end position="418"/>
    </location>
</feature>
<feature type="turn" evidence="7">
    <location>
        <begin position="422"/>
        <end position="426"/>
    </location>
</feature>
<feature type="helix" evidence="7">
    <location>
        <begin position="427"/>
        <end position="432"/>
    </location>
</feature>
<feature type="strand" evidence="4">
    <location>
        <begin position="435"/>
        <end position="438"/>
    </location>
</feature>
<feature type="helix" evidence="7">
    <location>
        <begin position="439"/>
        <end position="444"/>
    </location>
</feature>
<feature type="helix" evidence="7">
    <location>
        <begin position="450"/>
        <end position="461"/>
    </location>
</feature>
<feature type="helix" evidence="7">
    <location>
        <begin position="466"/>
        <end position="482"/>
    </location>
</feature>
<feature type="strand" evidence="7">
    <location>
        <begin position="486"/>
        <end position="492"/>
    </location>
</feature>
<feature type="strand" evidence="7">
    <location>
        <begin position="495"/>
        <end position="498"/>
    </location>
</feature>
<feature type="helix" evidence="7">
    <location>
        <begin position="500"/>
        <end position="502"/>
    </location>
</feature>
<feature type="helix" evidence="7">
    <location>
        <begin position="516"/>
        <end position="518"/>
    </location>
</feature>
<sequence length="524" mass="58719">MLSTLRRTLFALLACASFIVHAAAPDEITTAWPVNVGPLNPHLYTPNQMFAQSMVYEPLVKYQADGSVIPWLAKSWTHSEDGKTWTFTLRDDVKFSNGEPFDAEAAAENFRAVLDNRQRHAWLELANQIVDVKALSKTELQITLKSAYYPFLQELALPRPFRFIAPSQFKNHETMNGIKAPIGTGPWILQESKLNQYDVFVRNENYWGEKPAIKKITFNVIPDPTTRAVAFETGDIDLLYGNEGLLPLDTFARFSQNPAYHTQLSQPIETVMLALNTAKAPTNELAVREALNYAVNKKSLIDNALYGTQQVADTLFAPSVPYANLGLKPSQYDPQKAKALLEKAGWTLPAGKDIREKNGQPLRIELSFIGTDALSKSMAEIIQADMRQIGADVSLIGEEESSIYARQRDGRFGMIFHRTWGAPYDPHAFLSSMRVPSHADFQAQQGLADKPLIDKEIGEVLATHDETQRQALYRDILTRLHDEAVYLPISYISMMVVSKPELGNIPYAPIATEIPFEQIKPVKP</sequence>
<keyword id="KW-0002">3D-structure</keyword>
<keyword id="KW-0533">Nickel</keyword>
<keyword id="KW-0574">Periplasm</keyword>
<keyword id="KW-1185">Reference proteome</keyword>
<keyword id="KW-0732">Signal</keyword>
<keyword id="KW-0813">Transport</keyword>
<name>NIKA_ECOLI</name>
<gene>
    <name type="primary">nikA</name>
    <name type="ordered locus">b3476</name>
    <name type="ordered locus">JW3441</name>
</gene>
<dbReference type="EMBL" id="X73143">
    <property type="protein sequence ID" value="CAA51659.1"/>
    <property type="molecule type" value="Genomic_DNA"/>
</dbReference>
<dbReference type="EMBL" id="U00039">
    <property type="protein sequence ID" value="AAB18451.1"/>
    <property type="molecule type" value="Genomic_DNA"/>
</dbReference>
<dbReference type="EMBL" id="U00096">
    <property type="protein sequence ID" value="AAC76501.1"/>
    <property type="molecule type" value="Genomic_DNA"/>
</dbReference>
<dbReference type="EMBL" id="AP009048">
    <property type="protein sequence ID" value="BAE77817.1"/>
    <property type="molecule type" value="Genomic_DNA"/>
</dbReference>
<dbReference type="PIR" id="S39594">
    <property type="entry name" value="S39594"/>
</dbReference>
<dbReference type="RefSeq" id="NP_417933.1">
    <property type="nucleotide sequence ID" value="NC_000913.3"/>
</dbReference>
<dbReference type="RefSeq" id="WP_000953361.1">
    <property type="nucleotide sequence ID" value="NZ_SSZK01000008.1"/>
</dbReference>
<dbReference type="PDB" id="1UIU">
    <property type="method" value="X-ray"/>
    <property type="resolution" value="1.85 A"/>
    <property type="chains" value="A/B=23-524"/>
</dbReference>
<dbReference type="PDB" id="1UIV">
    <property type="method" value="X-ray"/>
    <property type="resolution" value="1.95 A"/>
    <property type="chains" value="A/B=23-524"/>
</dbReference>
<dbReference type="PDB" id="1ZLQ">
    <property type="method" value="X-ray"/>
    <property type="resolution" value="1.80 A"/>
    <property type="chains" value="A/B=23-524"/>
</dbReference>
<dbReference type="PDB" id="2NOO">
    <property type="method" value="X-ray"/>
    <property type="resolution" value="1.65 A"/>
    <property type="chains" value="A=23-524"/>
</dbReference>
<dbReference type="PDB" id="3DP8">
    <property type="method" value="X-ray"/>
    <property type="resolution" value="2.50 A"/>
    <property type="chains" value="A/B/C=23-524"/>
</dbReference>
<dbReference type="PDB" id="3E3K">
    <property type="method" value="X-ray"/>
    <property type="resolution" value="2.80 A"/>
    <property type="chains" value="A/B/C=23-524"/>
</dbReference>
<dbReference type="PDB" id="3MVW">
    <property type="method" value="X-ray"/>
    <property type="resolution" value="1.79 A"/>
    <property type="chains" value="A/B=23-524"/>
</dbReference>
<dbReference type="PDB" id="3MVX">
    <property type="method" value="X-ray"/>
    <property type="resolution" value="1.70 A"/>
    <property type="chains" value="A/B=23-524"/>
</dbReference>
<dbReference type="PDB" id="3MVY">
    <property type="method" value="X-ray"/>
    <property type="resolution" value="2.50 A"/>
    <property type="chains" value="A/B=23-524"/>
</dbReference>
<dbReference type="PDB" id="3MVZ">
    <property type="method" value="X-ray"/>
    <property type="resolution" value="1.70 A"/>
    <property type="chains" value="A/B=23-524"/>
</dbReference>
<dbReference type="PDB" id="3MW0">
    <property type="method" value="X-ray"/>
    <property type="resolution" value="2.30 A"/>
    <property type="chains" value="A/B=23-524"/>
</dbReference>
<dbReference type="PDB" id="3MZ9">
    <property type="method" value="X-ray"/>
    <property type="resolution" value="1.80 A"/>
    <property type="chains" value="A/B=23-524"/>
</dbReference>
<dbReference type="PDB" id="3MZB">
    <property type="method" value="X-ray"/>
    <property type="resolution" value="1.70 A"/>
    <property type="chains" value="A/B=23-523"/>
</dbReference>
<dbReference type="PDB" id="3QIM">
    <property type="method" value="X-ray"/>
    <property type="resolution" value="2.10 A"/>
    <property type="chains" value="A/B=23-524"/>
</dbReference>
<dbReference type="PDB" id="4DCX">
    <property type="method" value="X-ray"/>
    <property type="resolution" value="2.00 A"/>
    <property type="chains" value="A/B=23-524"/>
</dbReference>
<dbReference type="PDB" id="4DCY">
    <property type="method" value="X-ray"/>
    <property type="resolution" value="2.00 A"/>
    <property type="chains" value="A/B=23-524"/>
</dbReference>
<dbReference type="PDB" id="4I8C">
    <property type="method" value="X-ray"/>
    <property type="resolution" value="2.50 A"/>
    <property type="chains" value="A/B/C=23-524"/>
</dbReference>
<dbReference type="PDB" id="4I9D">
    <property type="method" value="X-ray"/>
    <property type="resolution" value="1.70 A"/>
    <property type="chains" value="A/B=23-524"/>
</dbReference>
<dbReference type="PDB" id="5L8D">
    <property type="method" value="X-ray"/>
    <property type="resolution" value="1.80 A"/>
    <property type="chains" value="A/B=23-524"/>
</dbReference>
<dbReference type="PDB" id="5MWU">
    <property type="method" value="X-ray"/>
    <property type="resolution" value="1.80 A"/>
    <property type="chains" value="A/B=23-524"/>
</dbReference>
<dbReference type="PDB" id="5ON0">
    <property type="method" value="X-ray"/>
    <property type="resolution" value="1.90 A"/>
    <property type="chains" value="A/B=23-524"/>
</dbReference>
<dbReference type="PDB" id="5ON1">
    <property type="method" value="X-ray"/>
    <property type="resolution" value="1.70 A"/>
    <property type="chains" value="A/B=23-524"/>
</dbReference>
<dbReference type="PDB" id="5ON4">
    <property type="method" value="X-ray"/>
    <property type="resolution" value="2.30 A"/>
    <property type="chains" value="A/B=23-524"/>
</dbReference>
<dbReference type="PDB" id="5ON5">
    <property type="method" value="X-ray"/>
    <property type="resolution" value="1.70 A"/>
    <property type="chains" value="A/B=23-524"/>
</dbReference>
<dbReference type="PDB" id="5ON8">
    <property type="method" value="X-ray"/>
    <property type="resolution" value="1.60 A"/>
    <property type="chains" value="A/B=23-524"/>
</dbReference>
<dbReference type="PDB" id="5ON9">
    <property type="method" value="X-ray"/>
    <property type="resolution" value="1.70 A"/>
    <property type="chains" value="A/B=23-524"/>
</dbReference>
<dbReference type="PDB" id="6R4Q">
    <property type="method" value="X-ray"/>
    <property type="resolution" value="1.90 A"/>
    <property type="chains" value="A/B=23-524"/>
</dbReference>
<dbReference type="PDB" id="7A0C">
    <property type="method" value="X-ray"/>
    <property type="resolution" value="1.90 A"/>
    <property type="chains" value="A/B=23-524"/>
</dbReference>
<dbReference type="PDB" id="8SPM">
    <property type="method" value="X-ray"/>
    <property type="resolution" value="2.15 A"/>
    <property type="chains" value="A=24-522"/>
</dbReference>
<dbReference type="PDBsum" id="1UIU"/>
<dbReference type="PDBsum" id="1UIV"/>
<dbReference type="PDBsum" id="1ZLQ"/>
<dbReference type="PDBsum" id="2NOO"/>
<dbReference type="PDBsum" id="3DP8"/>
<dbReference type="PDBsum" id="3E3K"/>
<dbReference type="PDBsum" id="3MVW"/>
<dbReference type="PDBsum" id="3MVX"/>
<dbReference type="PDBsum" id="3MVY"/>
<dbReference type="PDBsum" id="3MVZ"/>
<dbReference type="PDBsum" id="3MW0"/>
<dbReference type="PDBsum" id="3MZ9"/>
<dbReference type="PDBsum" id="3MZB"/>
<dbReference type="PDBsum" id="3QIM"/>
<dbReference type="PDBsum" id="4DCX"/>
<dbReference type="PDBsum" id="4DCY"/>
<dbReference type="PDBsum" id="4I8C"/>
<dbReference type="PDBsum" id="4I9D"/>
<dbReference type="PDBsum" id="5L8D"/>
<dbReference type="PDBsum" id="5MWU"/>
<dbReference type="PDBsum" id="5ON0"/>
<dbReference type="PDBsum" id="5ON1"/>
<dbReference type="PDBsum" id="5ON4"/>
<dbReference type="PDBsum" id="5ON5"/>
<dbReference type="PDBsum" id="5ON8"/>
<dbReference type="PDBsum" id="5ON9"/>
<dbReference type="PDBsum" id="6R4Q"/>
<dbReference type="PDBsum" id="7A0C"/>
<dbReference type="PDBsum" id="8SPM"/>
<dbReference type="BMRB" id="P33590"/>
<dbReference type="SMR" id="P33590"/>
<dbReference type="BioGRID" id="4262491">
    <property type="interactions" value="50"/>
</dbReference>
<dbReference type="ComplexPortal" id="CPX-4348">
    <property type="entry name" value="Nickel ABC transporter complex"/>
</dbReference>
<dbReference type="DIP" id="DIP-10340N"/>
<dbReference type="FunCoup" id="P33590">
    <property type="interactions" value="186"/>
</dbReference>
<dbReference type="IntAct" id="P33590">
    <property type="interactions" value="1"/>
</dbReference>
<dbReference type="STRING" id="511145.b3476"/>
<dbReference type="DrugBank" id="DB03374">
    <property type="generic name" value="3,5-Diiodotyrosine"/>
</dbReference>
<dbReference type="TCDB" id="3.A.1.5.3">
    <property type="family name" value="the atp-binding cassette (abc) superfamily"/>
</dbReference>
<dbReference type="jPOST" id="P33590"/>
<dbReference type="PaxDb" id="511145-b3476"/>
<dbReference type="EnsemblBacteria" id="AAC76501">
    <property type="protein sequence ID" value="AAC76501"/>
    <property type="gene ID" value="b3476"/>
</dbReference>
<dbReference type="GeneID" id="947981"/>
<dbReference type="KEGG" id="ecj:JW3441"/>
<dbReference type="KEGG" id="eco:b3476"/>
<dbReference type="KEGG" id="ecoc:C3026_18825"/>
<dbReference type="PATRIC" id="fig|1411691.4.peg.3249"/>
<dbReference type="EchoBASE" id="EB2000"/>
<dbReference type="eggNOG" id="COG0747">
    <property type="taxonomic scope" value="Bacteria"/>
</dbReference>
<dbReference type="HOGENOM" id="CLU_017028_7_5_6"/>
<dbReference type="InParanoid" id="P33590"/>
<dbReference type="OMA" id="MEEDDYW"/>
<dbReference type="OrthoDB" id="9801912at2"/>
<dbReference type="PhylomeDB" id="P33590"/>
<dbReference type="BioCyc" id="EcoCyc:NIKA-MONOMER"/>
<dbReference type="BioCyc" id="MetaCyc:NIKA-MONOMER"/>
<dbReference type="EvolutionaryTrace" id="P33590"/>
<dbReference type="PRO" id="PR:P33590"/>
<dbReference type="Proteomes" id="UP000000625">
    <property type="component" value="Chromosome"/>
</dbReference>
<dbReference type="GO" id="GO:0055052">
    <property type="term" value="C:ATP-binding cassette (ABC) transporter complex, substrate-binding subunit-containing"/>
    <property type="evidence" value="ECO:0000303"/>
    <property type="project" value="ComplexPortal"/>
</dbReference>
<dbReference type="GO" id="GO:0016020">
    <property type="term" value="C:membrane"/>
    <property type="evidence" value="ECO:0000303"/>
    <property type="project" value="ComplexPortal"/>
</dbReference>
<dbReference type="GO" id="GO:0030288">
    <property type="term" value="C:outer membrane-bounded periplasmic space"/>
    <property type="evidence" value="ECO:0000314"/>
    <property type="project" value="EcoCyc"/>
</dbReference>
<dbReference type="GO" id="GO:0042597">
    <property type="term" value="C:periplasmic space"/>
    <property type="evidence" value="ECO:0000314"/>
    <property type="project" value="EcoliWiki"/>
</dbReference>
<dbReference type="GO" id="GO:0020037">
    <property type="term" value="F:heme binding"/>
    <property type="evidence" value="ECO:0000314"/>
    <property type="project" value="EcoliWiki"/>
</dbReference>
<dbReference type="GO" id="GO:0051540">
    <property type="term" value="F:metal cluster binding"/>
    <property type="evidence" value="ECO:0000314"/>
    <property type="project" value="EcoCyc"/>
</dbReference>
<dbReference type="GO" id="GO:0016151">
    <property type="term" value="F:nickel cation binding"/>
    <property type="evidence" value="ECO:0000314"/>
    <property type="project" value="EcoliWiki"/>
</dbReference>
<dbReference type="GO" id="GO:1904680">
    <property type="term" value="F:peptide transmembrane transporter activity"/>
    <property type="evidence" value="ECO:0000318"/>
    <property type="project" value="GO_Central"/>
</dbReference>
<dbReference type="GO" id="GO:0046914">
    <property type="term" value="F:transition metal ion binding"/>
    <property type="evidence" value="ECO:0000314"/>
    <property type="project" value="EcoliWiki"/>
</dbReference>
<dbReference type="GO" id="GO:0050919">
    <property type="term" value="P:negative chemotaxis"/>
    <property type="evidence" value="ECO:0000315"/>
    <property type="project" value="EcoCyc"/>
</dbReference>
<dbReference type="GO" id="GO:0098716">
    <property type="term" value="P:nickel cation import across plasma membrane"/>
    <property type="evidence" value="ECO:0000303"/>
    <property type="project" value="ComplexPortal"/>
</dbReference>
<dbReference type="GO" id="GO:0015675">
    <property type="term" value="P:nickel cation transport"/>
    <property type="evidence" value="ECO:0000250"/>
    <property type="project" value="EcoCyc"/>
</dbReference>
<dbReference type="GO" id="GO:0015833">
    <property type="term" value="P:peptide transport"/>
    <property type="evidence" value="ECO:0000318"/>
    <property type="project" value="GO_Central"/>
</dbReference>
<dbReference type="CDD" id="cd08489">
    <property type="entry name" value="PBP2_NikA"/>
    <property type="match status" value="1"/>
</dbReference>
<dbReference type="FunFam" id="3.10.105.10:FF:000007">
    <property type="entry name" value="Nickel ABC transporter, periplasmic nickel-binding protein"/>
    <property type="match status" value="1"/>
</dbReference>
<dbReference type="FunFam" id="3.40.190.10:FF:000134">
    <property type="entry name" value="Nickel-binding periplasmic protein NikA"/>
    <property type="match status" value="1"/>
</dbReference>
<dbReference type="Gene3D" id="3.10.105.10">
    <property type="entry name" value="Dipeptide-binding Protein, Domain 3"/>
    <property type="match status" value="1"/>
</dbReference>
<dbReference type="Gene3D" id="3.40.190.10">
    <property type="entry name" value="Periplasmic binding protein-like II"/>
    <property type="match status" value="1"/>
</dbReference>
<dbReference type="InterPro" id="IPR011980">
    <property type="entry name" value="CntA-like"/>
</dbReference>
<dbReference type="InterPro" id="IPR030678">
    <property type="entry name" value="Peptide/Ni-bd"/>
</dbReference>
<dbReference type="InterPro" id="IPR039424">
    <property type="entry name" value="SBP_5"/>
</dbReference>
<dbReference type="InterPro" id="IPR023765">
    <property type="entry name" value="SBP_5_CS"/>
</dbReference>
<dbReference type="InterPro" id="IPR000914">
    <property type="entry name" value="SBP_5_dom"/>
</dbReference>
<dbReference type="NCBIfam" id="TIGR02294">
    <property type="entry name" value="nickel_nikA"/>
    <property type="match status" value="1"/>
</dbReference>
<dbReference type="PANTHER" id="PTHR30290:SF37">
    <property type="entry name" value="NICKEL-BINDING PERIPLASMIC PROTEIN"/>
    <property type="match status" value="1"/>
</dbReference>
<dbReference type="PANTHER" id="PTHR30290">
    <property type="entry name" value="PERIPLASMIC BINDING COMPONENT OF ABC TRANSPORTER"/>
    <property type="match status" value="1"/>
</dbReference>
<dbReference type="Pfam" id="PF00496">
    <property type="entry name" value="SBP_bac_5"/>
    <property type="match status" value="1"/>
</dbReference>
<dbReference type="PIRSF" id="PIRSF002741">
    <property type="entry name" value="MppA"/>
    <property type="match status" value="1"/>
</dbReference>
<dbReference type="SUPFAM" id="SSF53850">
    <property type="entry name" value="Periplasmic binding protein-like II"/>
    <property type="match status" value="1"/>
</dbReference>
<dbReference type="PROSITE" id="PS01040">
    <property type="entry name" value="SBP_BACTERIAL_5"/>
    <property type="match status" value="1"/>
</dbReference>
<reference key="1">
    <citation type="journal article" date="1993" name="Mol. Microbiol.">
        <title>The nik operon of Escherichia coli encodes a periplasmic binding-protein-dependent transport system for nickel.</title>
        <authorList>
            <person name="Navarro C."/>
            <person name="Wu L.-F."/>
            <person name="Mandrand-Berthelot M.-A."/>
        </authorList>
    </citation>
    <scope>NUCLEOTIDE SEQUENCE [GENOMIC DNA]</scope>
    <source>
        <strain>K12</strain>
    </source>
</reference>
<reference key="2">
    <citation type="journal article" date="1994" name="Nucleic Acids Res.">
        <title>Analysis of the Escherichia coli genome. V. DNA sequence of the region from 76.0 to 81.5 minutes.</title>
        <authorList>
            <person name="Sofia H.J."/>
            <person name="Burland V."/>
            <person name="Daniels D.L."/>
            <person name="Plunkett G. III"/>
            <person name="Blattner F.R."/>
        </authorList>
    </citation>
    <scope>NUCLEOTIDE SEQUENCE [LARGE SCALE GENOMIC DNA]</scope>
    <source>
        <strain>K12 / MG1655 / ATCC 47076</strain>
    </source>
</reference>
<reference key="3">
    <citation type="journal article" date="1997" name="Science">
        <title>The complete genome sequence of Escherichia coli K-12.</title>
        <authorList>
            <person name="Blattner F.R."/>
            <person name="Plunkett G. III"/>
            <person name="Bloch C.A."/>
            <person name="Perna N.T."/>
            <person name="Burland V."/>
            <person name="Riley M."/>
            <person name="Collado-Vides J."/>
            <person name="Glasner J.D."/>
            <person name="Rode C.K."/>
            <person name="Mayhew G.F."/>
            <person name="Gregor J."/>
            <person name="Davis N.W."/>
            <person name="Kirkpatrick H.A."/>
            <person name="Goeden M.A."/>
            <person name="Rose D.J."/>
            <person name="Mau B."/>
            <person name="Shao Y."/>
        </authorList>
    </citation>
    <scope>NUCLEOTIDE SEQUENCE [LARGE SCALE GENOMIC DNA]</scope>
    <source>
        <strain>K12 / MG1655 / ATCC 47076</strain>
    </source>
</reference>
<reference key="4">
    <citation type="journal article" date="2006" name="Mol. Syst. Biol.">
        <title>Highly accurate genome sequences of Escherichia coli K-12 strains MG1655 and W3110.</title>
        <authorList>
            <person name="Hayashi K."/>
            <person name="Morooka N."/>
            <person name="Yamamoto Y."/>
            <person name="Fujita K."/>
            <person name="Isono K."/>
            <person name="Choi S."/>
            <person name="Ohtsubo E."/>
            <person name="Baba T."/>
            <person name="Wanner B.L."/>
            <person name="Mori H."/>
            <person name="Horiuchi T."/>
        </authorList>
    </citation>
    <scope>NUCLEOTIDE SEQUENCE [LARGE SCALE GENOMIC DNA]</scope>
    <source>
        <strain>K12 / W3110 / ATCC 27325 / DSM 5911</strain>
    </source>
</reference>
<reference key="5">
    <citation type="journal article" date="2003" name="J. Biol. Chem.">
        <title>Crystal structures of the liganded and unliganded nickel-binding protein NikA from Escherichia coli.</title>
        <authorList>
            <person name="Heddle J."/>
            <person name="Scott D.J."/>
            <person name="Unzai S."/>
            <person name="Park S.Y."/>
            <person name="Tame J.R."/>
        </authorList>
    </citation>
    <scope>X-RAY CRYSTALLOGRAPHY (1.85 ANGSTROMS) OF 23-524</scope>
</reference>
<organism>
    <name type="scientific">Escherichia coli (strain K12)</name>
    <dbReference type="NCBI Taxonomy" id="83333"/>
    <lineage>
        <taxon>Bacteria</taxon>
        <taxon>Pseudomonadati</taxon>
        <taxon>Pseudomonadota</taxon>
        <taxon>Gammaproteobacteria</taxon>
        <taxon>Enterobacterales</taxon>
        <taxon>Enterobacteriaceae</taxon>
        <taxon>Escherichia</taxon>
    </lineage>
</organism>